<sequence length="101" mass="11431">MAGQKIRIRLKAYDHEAIDASARKIVETVVRTGASVVGPVPLPTEKNVYCVIRSPHKYKDSREHFEMRTHKRLIDIIDPTPKTVDALMRIDLPASVDVNIQ</sequence>
<feature type="chain" id="PRO_0000146560" description="Small ribosomal subunit protein uS10">
    <location>
        <begin position="1"/>
        <end position="101"/>
    </location>
</feature>
<reference key="1">
    <citation type="journal article" date="1998" name="Nature">
        <title>Deciphering the biology of Mycobacterium tuberculosis from the complete genome sequence.</title>
        <authorList>
            <person name="Cole S.T."/>
            <person name="Brosch R."/>
            <person name="Parkhill J."/>
            <person name="Garnier T."/>
            <person name="Churcher C.M."/>
            <person name="Harris D.E."/>
            <person name="Gordon S.V."/>
            <person name="Eiglmeier K."/>
            <person name="Gas S."/>
            <person name="Barry C.E. III"/>
            <person name="Tekaia F."/>
            <person name="Badcock K."/>
            <person name="Basham D."/>
            <person name="Brown D."/>
            <person name="Chillingworth T."/>
            <person name="Connor R."/>
            <person name="Davies R.M."/>
            <person name="Devlin K."/>
            <person name="Feltwell T."/>
            <person name="Gentles S."/>
            <person name="Hamlin N."/>
            <person name="Holroyd S."/>
            <person name="Hornsby T."/>
            <person name="Jagels K."/>
            <person name="Krogh A."/>
            <person name="McLean J."/>
            <person name="Moule S."/>
            <person name="Murphy L.D."/>
            <person name="Oliver S."/>
            <person name="Osborne J."/>
            <person name="Quail M.A."/>
            <person name="Rajandream M.A."/>
            <person name="Rogers J."/>
            <person name="Rutter S."/>
            <person name="Seeger K."/>
            <person name="Skelton S."/>
            <person name="Squares S."/>
            <person name="Squares R."/>
            <person name="Sulston J.E."/>
            <person name="Taylor K."/>
            <person name="Whitehead S."/>
            <person name="Barrell B.G."/>
        </authorList>
    </citation>
    <scope>NUCLEOTIDE SEQUENCE [LARGE SCALE GENOMIC DNA]</scope>
    <source>
        <strain>ATCC 25618 / H37Rv</strain>
    </source>
</reference>
<reference key="2">
    <citation type="journal article" date="2011" name="Mol. Cell. Proteomics">
        <title>Proteogenomic analysis of Mycobacterium tuberculosis by high resolution mass spectrometry.</title>
        <authorList>
            <person name="Kelkar D.S."/>
            <person name="Kumar D."/>
            <person name="Kumar P."/>
            <person name="Balakrishnan L."/>
            <person name="Muthusamy B."/>
            <person name="Yadav A.K."/>
            <person name="Shrivastava P."/>
            <person name="Marimuthu A."/>
            <person name="Anand S."/>
            <person name="Sundaram H."/>
            <person name="Kingsbury R."/>
            <person name="Harsha H.C."/>
            <person name="Nair B."/>
            <person name="Prasad T.S."/>
            <person name="Chauhan D.S."/>
            <person name="Katoch K."/>
            <person name="Katoch V.M."/>
            <person name="Kumar P."/>
            <person name="Chaerkady R."/>
            <person name="Ramachandran S."/>
            <person name="Dash D."/>
            <person name="Pandey A."/>
        </authorList>
    </citation>
    <scope>IDENTIFICATION BY MASS SPECTROMETRY [LARGE SCALE ANALYSIS]</scope>
    <source>
        <strain>ATCC 25618 / H37Rv</strain>
    </source>
</reference>
<protein>
    <recommendedName>
        <fullName evidence="1">Small ribosomal subunit protein uS10</fullName>
    </recommendedName>
    <alternativeName>
        <fullName evidence="2">30S ribosomal protein S10</fullName>
    </alternativeName>
</protein>
<evidence type="ECO:0000255" key="1">
    <source>
        <dbReference type="HAMAP-Rule" id="MF_00508"/>
    </source>
</evidence>
<evidence type="ECO:0000305" key="2"/>
<organism>
    <name type="scientific">Mycobacterium tuberculosis (strain ATCC 25618 / H37Rv)</name>
    <dbReference type="NCBI Taxonomy" id="83332"/>
    <lineage>
        <taxon>Bacteria</taxon>
        <taxon>Bacillati</taxon>
        <taxon>Actinomycetota</taxon>
        <taxon>Actinomycetes</taxon>
        <taxon>Mycobacteriales</taxon>
        <taxon>Mycobacteriaceae</taxon>
        <taxon>Mycobacterium</taxon>
        <taxon>Mycobacterium tuberculosis complex</taxon>
    </lineage>
</organism>
<accession>P9WH67</accession>
<accession>L0T682</accession>
<accession>O08117</accession>
<accession>P0A5X0</accession>
<accession>P95048</accession>
<comment type="function">
    <text evidence="1">Involved in the binding of tRNA to the ribosomes.</text>
</comment>
<comment type="subunit">
    <text evidence="1">Part of the 30S ribosomal subunit.</text>
</comment>
<comment type="similarity">
    <text evidence="1">Belongs to the universal ribosomal protein uS10 family.</text>
</comment>
<name>RS10_MYCTU</name>
<keyword id="KW-0002">3D-structure</keyword>
<keyword id="KW-1185">Reference proteome</keyword>
<keyword id="KW-0687">Ribonucleoprotein</keyword>
<keyword id="KW-0689">Ribosomal protein</keyword>
<gene>
    <name evidence="1" type="primary">rpsJ</name>
    <name type="synonym">rpsX</name>
    <name type="ordered locus">Rv0700</name>
    <name type="ORF">MTCY210.19</name>
</gene>
<proteinExistence type="evidence at protein level"/>
<dbReference type="EMBL" id="AL123456">
    <property type="protein sequence ID" value="CCP43444.1"/>
    <property type="molecule type" value="Genomic_DNA"/>
</dbReference>
<dbReference type="PIR" id="G70641">
    <property type="entry name" value="G70641"/>
</dbReference>
<dbReference type="RefSeq" id="NP_215214.1">
    <property type="nucleotide sequence ID" value="NC_000962.3"/>
</dbReference>
<dbReference type="RefSeq" id="WP_003403578.1">
    <property type="nucleotide sequence ID" value="NZ_NVQJ01000007.1"/>
</dbReference>
<dbReference type="PDB" id="5V93">
    <property type="method" value="EM"/>
    <property type="resolution" value="4.00 A"/>
    <property type="chains" value="j=1-101"/>
</dbReference>
<dbReference type="PDB" id="7KGB">
    <property type="method" value="EM"/>
    <property type="resolution" value="2.70 A"/>
    <property type="chains" value="j=1-101"/>
</dbReference>
<dbReference type="PDB" id="7MSC">
    <property type="method" value="EM"/>
    <property type="resolution" value="2.97 A"/>
    <property type="chains" value="j=1-101"/>
</dbReference>
<dbReference type="PDB" id="7MSH">
    <property type="method" value="EM"/>
    <property type="resolution" value="3.23 A"/>
    <property type="chains" value="j=1-101"/>
</dbReference>
<dbReference type="PDB" id="7MSM">
    <property type="method" value="EM"/>
    <property type="resolution" value="2.79 A"/>
    <property type="chains" value="j=1-101"/>
</dbReference>
<dbReference type="PDB" id="7MSZ">
    <property type="method" value="EM"/>
    <property type="resolution" value="3.10 A"/>
    <property type="chains" value="j=1-101"/>
</dbReference>
<dbReference type="PDB" id="7MT2">
    <property type="method" value="EM"/>
    <property type="resolution" value="2.76 A"/>
    <property type="chains" value="j=1-101"/>
</dbReference>
<dbReference type="PDB" id="7MT3">
    <property type="method" value="EM"/>
    <property type="resolution" value="2.80 A"/>
    <property type="chains" value="j=1-101"/>
</dbReference>
<dbReference type="PDB" id="7MT7">
    <property type="method" value="EM"/>
    <property type="resolution" value="2.71 A"/>
    <property type="chains" value="j=1-101"/>
</dbReference>
<dbReference type="PDB" id="7SFR">
    <property type="method" value="EM"/>
    <property type="resolution" value="2.60 A"/>
    <property type="chains" value="j=1-101"/>
</dbReference>
<dbReference type="PDBsum" id="5V93"/>
<dbReference type="PDBsum" id="7KGB"/>
<dbReference type="PDBsum" id="7MSC"/>
<dbReference type="PDBsum" id="7MSH"/>
<dbReference type="PDBsum" id="7MSM"/>
<dbReference type="PDBsum" id="7MSZ"/>
<dbReference type="PDBsum" id="7MT2"/>
<dbReference type="PDBsum" id="7MT3"/>
<dbReference type="PDBsum" id="7MT7"/>
<dbReference type="PDBsum" id="7SFR"/>
<dbReference type="EMDB" id="EMD-22865"/>
<dbReference type="EMDB" id="EMD-23961"/>
<dbReference type="EMDB" id="EMD-23962"/>
<dbReference type="EMDB" id="EMD-23969"/>
<dbReference type="EMDB" id="EMD-23972"/>
<dbReference type="EMDB" id="EMD-23974"/>
<dbReference type="EMDB" id="EMD-23975"/>
<dbReference type="EMDB" id="EMD-23976"/>
<dbReference type="EMDB" id="EMD-8645"/>
<dbReference type="SMR" id="P9WH67"/>
<dbReference type="FunCoup" id="P9WH67">
    <property type="interactions" value="363"/>
</dbReference>
<dbReference type="STRING" id="83332.Rv0700"/>
<dbReference type="PaxDb" id="83332-Rv0700"/>
<dbReference type="DNASU" id="888331"/>
<dbReference type="GeneID" id="888331"/>
<dbReference type="GeneID" id="93438601"/>
<dbReference type="KEGG" id="mtu:Rv0700"/>
<dbReference type="KEGG" id="mtv:RVBD_0700"/>
<dbReference type="TubercuList" id="Rv0700"/>
<dbReference type="eggNOG" id="COG0051">
    <property type="taxonomic scope" value="Bacteria"/>
</dbReference>
<dbReference type="InParanoid" id="P9WH67"/>
<dbReference type="OrthoDB" id="9804464at2"/>
<dbReference type="PhylomeDB" id="P9WH67"/>
<dbReference type="PRO" id="PR:P9WH67"/>
<dbReference type="Proteomes" id="UP000001584">
    <property type="component" value="Chromosome"/>
</dbReference>
<dbReference type="GO" id="GO:0005829">
    <property type="term" value="C:cytosol"/>
    <property type="evidence" value="ECO:0007005"/>
    <property type="project" value="MTBBASE"/>
</dbReference>
<dbReference type="GO" id="GO:0009274">
    <property type="term" value="C:peptidoglycan-based cell wall"/>
    <property type="evidence" value="ECO:0007005"/>
    <property type="project" value="MTBBASE"/>
</dbReference>
<dbReference type="GO" id="GO:0005886">
    <property type="term" value="C:plasma membrane"/>
    <property type="evidence" value="ECO:0007005"/>
    <property type="project" value="MTBBASE"/>
</dbReference>
<dbReference type="GO" id="GO:0015935">
    <property type="term" value="C:small ribosomal subunit"/>
    <property type="evidence" value="ECO:0000318"/>
    <property type="project" value="GO_Central"/>
</dbReference>
<dbReference type="GO" id="GO:0003735">
    <property type="term" value="F:structural constituent of ribosome"/>
    <property type="evidence" value="ECO:0000318"/>
    <property type="project" value="GO_Central"/>
</dbReference>
<dbReference type="GO" id="GO:0000049">
    <property type="term" value="F:tRNA binding"/>
    <property type="evidence" value="ECO:0007669"/>
    <property type="project" value="UniProtKB-UniRule"/>
</dbReference>
<dbReference type="GO" id="GO:0006412">
    <property type="term" value="P:translation"/>
    <property type="evidence" value="ECO:0007669"/>
    <property type="project" value="UniProtKB-UniRule"/>
</dbReference>
<dbReference type="FunFam" id="3.30.70.600:FF:000001">
    <property type="entry name" value="30S ribosomal protein S10"/>
    <property type="match status" value="1"/>
</dbReference>
<dbReference type="Gene3D" id="3.30.70.600">
    <property type="entry name" value="Ribosomal protein S10 domain"/>
    <property type="match status" value="1"/>
</dbReference>
<dbReference type="HAMAP" id="MF_00508">
    <property type="entry name" value="Ribosomal_uS10"/>
    <property type="match status" value="1"/>
</dbReference>
<dbReference type="InterPro" id="IPR001848">
    <property type="entry name" value="Ribosomal_uS10"/>
</dbReference>
<dbReference type="InterPro" id="IPR018268">
    <property type="entry name" value="Ribosomal_uS10_CS"/>
</dbReference>
<dbReference type="InterPro" id="IPR027486">
    <property type="entry name" value="Ribosomal_uS10_dom"/>
</dbReference>
<dbReference type="InterPro" id="IPR036838">
    <property type="entry name" value="Ribosomal_uS10_dom_sf"/>
</dbReference>
<dbReference type="NCBIfam" id="NF001861">
    <property type="entry name" value="PRK00596.1"/>
    <property type="match status" value="1"/>
</dbReference>
<dbReference type="NCBIfam" id="TIGR01049">
    <property type="entry name" value="rpsJ_bact"/>
    <property type="match status" value="1"/>
</dbReference>
<dbReference type="PANTHER" id="PTHR11700">
    <property type="entry name" value="30S RIBOSOMAL PROTEIN S10 FAMILY MEMBER"/>
    <property type="match status" value="1"/>
</dbReference>
<dbReference type="Pfam" id="PF00338">
    <property type="entry name" value="Ribosomal_S10"/>
    <property type="match status" value="1"/>
</dbReference>
<dbReference type="PRINTS" id="PR00971">
    <property type="entry name" value="RIBOSOMALS10"/>
</dbReference>
<dbReference type="SMART" id="SM01403">
    <property type="entry name" value="Ribosomal_S10"/>
    <property type="match status" value="1"/>
</dbReference>
<dbReference type="SUPFAM" id="SSF54999">
    <property type="entry name" value="Ribosomal protein S10"/>
    <property type="match status" value="1"/>
</dbReference>
<dbReference type="PROSITE" id="PS00361">
    <property type="entry name" value="RIBOSOMAL_S10"/>
    <property type="match status" value="1"/>
</dbReference>